<keyword id="KW-0378">Hydrolase</keyword>
<keyword id="KW-0546">Nucleotide metabolism</keyword>
<keyword id="KW-0547">Nucleotide-binding</keyword>
<name>DCD_ECTM1</name>
<sequence>MSIKSDKWIRRMAQEHGMIEPFVERQVRGADSSRVISYGVSSYGYDVRCADEFKVFTNIHSAIVDPKNFDEKSFVDIKSDVCIIPPNSFALARTVEYFRIPRDVLTICLGKSTYARCGIIVNVTPLEPEWEGHVTLEFSNTTNLPAKIYANEGVAQMLFLQSDEACEVSYKDRGGKYQGQTGVTLPRT</sequence>
<accession>A4XS57</accession>
<dbReference type="EC" id="3.5.4.13" evidence="1"/>
<dbReference type="EMBL" id="CP000680">
    <property type="protein sequence ID" value="ABP84173.1"/>
    <property type="molecule type" value="Genomic_DNA"/>
</dbReference>
<dbReference type="SMR" id="A4XS57"/>
<dbReference type="STRING" id="399739.Pmen_1408"/>
<dbReference type="KEGG" id="pmy:Pmen_1408"/>
<dbReference type="PATRIC" id="fig|399739.8.peg.1429"/>
<dbReference type="eggNOG" id="COG0717">
    <property type="taxonomic scope" value="Bacteria"/>
</dbReference>
<dbReference type="HOGENOM" id="CLU_087476_4_0_6"/>
<dbReference type="OrthoDB" id="9780956at2"/>
<dbReference type="UniPathway" id="UPA00610">
    <property type="reaction ID" value="UER00665"/>
</dbReference>
<dbReference type="GO" id="GO:0008829">
    <property type="term" value="F:dCTP deaminase activity"/>
    <property type="evidence" value="ECO:0007669"/>
    <property type="project" value="UniProtKB-UniRule"/>
</dbReference>
<dbReference type="GO" id="GO:0000166">
    <property type="term" value="F:nucleotide binding"/>
    <property type="evidence" value="ECO:0007669"/>
    <property type="project" value="UniProtKB-KW"/>
</dbReference>
<dbReference type="GO" id="GO:0006226">
    <property type="term" value="P:dUMP biosynthetic process"/>
    <property type="evidence" value="ECO:0007669"/>
    <property type="project" value="UniProtKB-UniPathway"/>
</dbReference>
<dbReference type="GO" id="GO:0006229">
    <property type="term" value="P:dUTP biosynthetic process"/>
    <property type="evidence" value="ECO:0007669"/>
    <property type="project" value="UniProtKB-UniRule"/>
</dbReference>
<dbReference type="GO" id="GO:0015949">
    <property type="term" value="P:nucleobase-containing small molecule interconversion"/>
    <property type="evidence" value="ECO:0007669"/>
    <property type="project" value="TreeGrafter"/>
</dbReference>
<dbReference type="CDD" id="cd07557">
    <property type="entry name" value="trimeric_dUTPase"/>
    <property type="match status" value="1"/>
</dbReference>
<dbReference type="FunFam" id="2.70.40.10:FF:000001">
    <property type="entry name" value="dCTP deaminase"/>
    <property type="match status" value="1"/>
</dbReference>
<dbReference type="Gene3D" id="2.70.40.10">
    <property type="match status" value="1"/>
</dbReference>
<dbReference type="HAMAP" id="MF_00146">
    <property type="entry name" value="dCTP_deaminase"/>
    <property type="match status" value="1"/>
</dbReference>
<dbReference type="InterPro" id="IPR011962">
    <property type="entry name" value="dCTP_deaminase"/>
</dbReference>
<dbReference type="InterPro" id="IPR036157">
    <property type="entry name" value="dUTPase-like_sf"/>
</dbReference>
<dbReference type="InterPro" id="IPR033704">
    <property type="entry name" value="dUTPase_trimeric"/>
</dbReference>
<dbReference type="NCBIfam" id="TIGR02274">
    <property type="entry name" value="dCTP_deam"/>
    <property type="match status" value="1"/>
</dbReference>
<dbReference type="PANTHER" id="PTHR42680">
    <property type="entry name" value="DCTP DEAMINASE"/>
    <property type="match status" value="1"/>
</dbReference>
<dbReference type="PANTHER" id="PTHR42680:SF3">
    <property type="entry name" value="DCTP DEAMINASE"/>
    <property type="match status" value="1"/>
</dbReference>
<dbReference type="Pfam" id="PF22769">
    <property type="entry name" value="DCD"/>
    <property type="match status" value="1"/>
</dbReference>
<dbReference type="SUPFAM" id="SSF51283">
    <property type="entry name" value="dUTPase-like"/>
    <property type="match status" value="1"/>
</dbReference>
<proteinExistence type="inferred from homology"/>
<protein>
    <recommendedName>
        <fullName evidence="1">dCTP deaminase</fullName>
        <ecNumber evidence="1">3.5.4.13</ecNumber>
    </recommendedName>
    <alternativeName>
        <fullName evidence="1">Deoxycytidine triphosphate deaminase</fullName>
    </alternativeName>
</protein>
<feature type="chain" id="PRO_1000009786" description="dCTP deaminase">
    <location>
        <begin position="1"/>
        <end position="188"/>
    </location>
</feature>
<feature type="active site" description="Proton donor/acceptor" evidence="1">
    <location>
        <position position="137"/>
    </location>
</feature>
<feature type="binding site" evidence="1">
    <location>
        <begin position="111"/>
        <end position="116"/>
    </location>
    <ligand>
        <name>dCTP</name>
        <dbReference type="ChEBI" id="CHEBI:61481"/>
    </ligand>
</feature>
<feature type="binding site" evidence="1">
    <location>
        <begin position="135"/>
        <end position="137"/>
    </location>
    <ligand>
        <name>dCTP</name>
        <dbReference type="ChEBI" id="CHEBI:61481"/>
    </ligand>
</feature>
<feature type="binding site" evidence="1">
    <location>
        <position position="156"/>
    </location>
    <ligand>
        <name>dCTP</name>
        <dbReference type="ChEBI" id="CHEBI:61481"/>
    </ligand>
</feature>
<feature type="binding site" evidence="1">
    <location>
        <position position="170"/>
    </location>
    <ligand>
        <name>dCTP</name>
        <dbReference type="ChEBI" id="CHEBI:61481"/>
    </ligand>
</feature>
<feature type="binding site" evidence="1">
    <location>
        <position position="180"/>
    </location>
    <ligand>
        <name>dCTP</name>
        <dbReference type="ChEBI" id="CHEBI:61481"/>
    </ligand>
</feature>
<organism>
    <name type="scientific">Ectopseudomonas mendocina (strain ymp)</name>
    <name type="common">Pseudomonas mendocina</name>
    <dbReference type="NCBI Taxonomy" id="399739"/>
    <lineage>
        <taxon>Bacteria</taxon>
        <taxon>Pseudomonadati</taxon>
        <taxon>Pseudomonadota</taxon>
        <taxon>Gammaproteobacteria</taxon>
        <taxon>Pseudomonadales</taxon>
        <taxon>Pseudomonadaceae</taxon>
        <taxon>Ectopseudomonas</taxon>
    </lineage>
</organism>
<comment type="function">
    <text evidence="1">Catalyzes the deamination of dCTP to dUTP.</text>
</comment>
<comment type="catalytic activity">
    <reaction evidence="1">
        <text>dCTP + H2O + H(+) = dUTP + NH4(+)</text>
        <dbReference type="Rhea" id="RHEA:22680"/>
        <dbReference type="ChEBI" id="CHEBI:15377"/>
        <dbReference type="ChEBI" id="CHEBI:15378"/>
        <dbReference type="ChEBI" id="CHEBI:28938"/>
        <dbReference type="ChEBI" id="CHEBI:61481"/>
        <dbReference type="ChEBI" id="CHEBI:61555"/>
        <dbReference type="EC" id="3.5.4.13"/>
    </reaction>
</comment>
<comment type="pathway">
    <text evidence="1">Pyrimidine metabolism; dUMP biosynthesis; dUMP from dCTP (dUTP route): step 1/2.</text>
</comment>
<comment type="subunit">
    <text evidence="1">Homotrimer.</text>
</comment>
<comment type="similarity">
    <text evidence="1">Belongs to the dCTP deaminase family.</text>
</comment>
<evidence type="ECO:0000255" key="1">
    <source>
        <dbReference type="HAMAP-Rule" id="MF_00146"/>
    </source>
</evidence>
<gene>
    <name evidence="1" type="primary">dcd</name>
    <name type="ordered locus">Pmen_1408</name>
</gene>
<reference key="1">
    <citation type="submission" date="2007-04" db="EMBL/GenBank/DDBJ databases">
        <title>Complete sequence of Pseudomonas mendocina ymp.</title>
        <authorList>
            <consortium name="US DOE Joint Genome Institute"/>
            <person name="Copeland A."/>
            <person name="Lucas S."/>
            <person name="Lapidus A."/>
            <person name="Barry K."/>
            <person name="Glavina del Rio T."/>
            <person name="Dalin E."/>
            <person name="Tice H."/>
            <person name="Pitluck S."/>
            <person name="Kiss H."/>
            <person name="Brettin T."/>
            <person name="Detter J.C."/>
            <person name="Bruce D."/>
            <person name="Han C."/>
            <person name="Schmutz J."/>
            <person name="Larimer F."/>
            <person name="Land M."/>
            <person name="Hauser L."/>
            <person name="Kyrpides N."/>
            <person name="Mikhailova N."/>
            <person name="Hersman L."/>
            <person name="Dubois J."/>
            <person name="Maurice P."/>
            <person name="Richardson P."/>
        </authorList>
    </citation>
    <scope>NUCLEOTIDE SEQUENCE [LARGE SCALE GENOMIC DNA]</scope>
    <source>
        <strain>ymp</strain>
    </source>
</reference>